<keyword id="KW-0030">Aminoacyl-tRNA synthetase</keyword>
<keyword id="KW-0067">ATP-binding</keyword>
<keyword id="KW-0963">Cytoplasm</keyword>
<keyword id="KW-0436">Ligase</keyword>
<keyword id="KW-0547">Nucleotide-binding</keyword>
<keyword id="KW-0648">Protein biosynthesis</keyword>
<proteinExistence type="inferred from homology"/>
<organism>
    <name type="scientific">Acinetobacter baylyi (strain ATCC 33305 / BD413 / ADP1)</name>
    <dbReference type="NCBI Taxonomy" id="62977"/>
    <lineage>
        <taxon>Bacteria</taxon>
        <taxon>Pseudomonadati</taxon>
        <taxon>Pseudomonadota</taxon>
        <taxon>Gammaproteobacteria</taxon>
        <taxon>Moraxellales</taxon>
        <taxon>Moraxellaceae</taxon>
        <taxon>Acinetobacter</taxon>
    </lineage>
</organism>
<evidence type="ECO:0000255" key="1">
    <source>
        <dbReference type="HAMAP-Rule" id="MF_00044"/>
    </source>
</evidence>
<evidence type="ECO:0000305" key="2"/>
<comment type="function">
    <text evidence="1">Aspartyl-tRNA synthetase with relaxed tRNA specificity since it is able to aspartylate not only its cognate tRNA(Asp) but also tRNA(Asn). Reaction proceeds in two steps: L-aspartate is first activated by ATP to form Asp-AMP and then transferred to the acceptor end of tRNA(Asp/Asn).</text>
</comment>
<comment type="catalytic activity">
    <reaction evidence="1">
        <text>tRNA(Asx) + L-aspartate + ATP = L-aspartyl-tRNA(Asx) + AMP + diphosphate</text>
        <dbReference type="Rhea" id="RHEA:18349"/>
        <dbReference type="Rhea" id="RHEA-COMP:9710"/>
        <dbReference type="Rhea" id="RHEA-COMP:9711"/>
        <dbReference type="ChEBI" id="CHEBI:29991"/>
        <dbReference type="ChEBI" id="CHEBI:30616"/>
        <dbReference type="ChEBI" id="CHEBI:33019"/>
        <dbReference type="ChEBI" id="CHEBI:78442"/>
        <dbReference type="ChEBI" id="CHEBI:78516"/>
        <dbReference type="ChEBI" id="CHEBI:456215"/>
        <dbReference type="EC" id="6.1.1.23"/>
    </reaction>
</comment>
<comment type="subunit">
    <text evidence="1">Homodimer.</text>
</comment>
<comment type="subcellular location">
    <subcellularLocation>
        <location evidence="1">Cytoplasm</location>
    </subcellularLocation>
</comment>
<comment type="similarity">
    <text evidence="1">Belongs to the class-II aminoacyl-tRNA synthetase family. Type 1 subfamily.</text>
</comment>
<comment type="sequence caution" evidence="2">
    <conflict type="erroneous initiation">
        <sequence resource="EMBL-CDS" id="CAG67532"/>
    </conflict>
</comment>
<protein>
    <recommendedName>
        <fullName evidence="1">Aspartate--tRNA(Asp/Asn) ligase</fullName>
        <ecNumber evidence="1">6.1.1.23</ecNumber>
    </recommendedName>
    <alternativeName>
        <fullName evidence="1">Aspartyl-tRNA synthetase</fullName>
        <shortName evidence="1">AspRS</shortName>
    </alternativeName>
    <alternativeName>
        <fullName evidence="1">Non-discriminating aspartyl-tRNA synthetase</fullName>
        <shortName evidence="1">ND-AspRS</shortName>
    </alternativeName>
</protein>
<sequence length="592" mass="66646">MMRTHYCGSLTEAQIDQTVTLCGWVHRRRDHGGVIFLDMRDRDGLVQVVIDPDTPEAFATADKVRSEFVLKITGRVRRRYEGTENSNMVSGQIEVLGKEIEVLAQSETPPFPLNDDNINISEEHRLKYRFLDIRRPEMLDRLRFRSKVTNLIRNYLDDHGFLDVETPILTRATPEGARDYLVPSRVQNGSFYALPQSPQLFKQLLMVGGIDRYYQIAKCFRDEDLRADRQPEFTQIDIETSFLNDDDIMDLMEGMTVKLFDELLGIKFDKFQRMPYSEAMRDYASDKPDLRIPLKLVDVADLMQDVEFKVFAGPAKDPKGRIAALRVPGAGALPRSAIDEYTKFVGIYGAKGLAYIKVNEIEKGVEGLQSPIVKFIEPIVMQLLERVGAENGDIVFFGADKAKVVNDAMGALRVKIGHDLKLVTCEWAPLWVVDFPMFEETDDGKWTSVHHPFTLPKSSVEDVKANPGEALSVAYDMVLNGTEVGGGSLRIYTLEMQKAIFEALGISDEEAEEKFSFLLNALRYGAPPHGGLAFGLDRLIMLMTGASSIRDVIAFPKTKTAECPLTQAPAPVEANQLRDLGIRLREQPKKED</sequence>
<reference key="1">
    <citation type="journal article" date="2004" name="Nucleic Acids Res.">
        <title>Unique features revealed by the genome sequence of Acinetobacter sp. ADP1, a versatile and naturally transformation competent bacterium.</title>
        <authorList>
            <person name="Barbe V."/>
            <person name="Vallenet D."/>
            <person name="Fonknechten N."/>
            <person name="Kreimeyer A."/>
            <person name="Oztas S."/>
            <person name="Labarre L."/>
            <person name="Cruveiller S."/>
            <person name="Robert C."/>
            <person name="Duprat S."/>
            <person name="Wincker P."/>
            <person name="Ornston L.N."/>
            <person name="Weissenbach J."/>
            <person name="Marliere P."/>
            <person name="Cohen G.N."/>
            <person name="Medigue C."/>
        </authorList>
    </citation>
    <scope>NUCLEOTIDE SEQUENCE [LARGE SCALE GENOMIC DNA]</scope>
    <source>
        <strain>ATCC 33305 / BD413 / ADP1</strain>
    </source>
</reference>
<feature type="chain" id="PRO_0000110815" description="Aspartate--tRNA(Asp/Asn) ligase">
    <location>
        <begin position="1"/>
        <end position="592"/>
    </location>
</feature>
<feature type="region of interest" description="Aspartate" evidence="1">
    <location>
        <begin position="199"/>
        <end position="202"/>
    </location>
</feature>
<feature type="binding site" evidence="1">
    <location>
        <position position="175"/>
    </location>
    <ligand>
        <name>L-aspartate</name>
        <dbReference type="ChEBI" id="CHEBI:29991"/>
    </ligand>
</feature>
<feature type="binding site" evidence="1">
    <location>
        <begin position="221"/>
        <end position="223"/>
    </location>
    <ligand>
        <name>ATP</name>
        <dbReference type="ChEBI" id="CHEBI:30616"/>
    </ligand>
</feature>
<feature type="binding site" evidence="1">
    <location>
        <position position="221"/>
    </location>
    <ligand>
        <name>L-aspartate</name>
        <dbReference type="ChEBI" id="CHEBI:29991"/>
    </ligand>
</feature>
<feature type="binding site" evidence="1">
    <location>
        <position position="230"/>
    </location>
    <ligand>
        <name>ATP</name>
        <dbReference type="ChEBI" id="CHEBI:30616"/>
    </ligand>
</feature>
<feature type="binding site" evidence="1">
    <location>
        <position position="450"/>
    </location>
    <ligand>
        <name>L-aspartate</name>
        <dbReference type="ChEBI" id="CHEBI:29991"/>
    </ligand>
</feature>
<feature type="binding site" evidence="1">
    <location>
        <position position="483"/>
    </location>
    <ligand>
        <name>ATP</name>
        <dbReference type="ChEBI" id="CHEBI:30616"/>
    </ligand>
</feature>
<feature type="binding site" evidence="1">
    <location>
        <position position="490"/>
    </location>
    <ligand>
        <name>L-aspartate</name>
        <dbReference type="ChEBI" id="CHEBI:29991"/>
    </ligand>
</feature>
<feature type="binding site" evidence="1">
    <location>
        <begin position="535"/>
        <end position="538"/>
    </location>
    <ligand>
        <name>ATP</name>
        <dbReference type="ChEBI" id="CHEBI:30616"/>
    </ligand>
</feature>
<feature type="site" description="Important for tRNA non-discrimination" evidence="1">
    <location>
        <position position="31"/>
    </location>
</feature>
<feature type="site" description="Important for tRNA non-discrimination" evidence="1">
    <location>
        <position position="82"/>
    </location>
</feature>
<name>SYDND_ACIAD</name>
<accession>Q6FEH6</accession>
<dbReference type="EC" id="6.1.1.23" evidence="1"/>
<dbReference type="EMBL" id="CR543861">
    <property type="protein sequence ID" value="CAG67532.1"/>
    <property type="status" value="ALT_INIT"/>
    <property type="molecule type" value="Genomic_DNA"/>
</dbReference>
<dbReference type="RefSeq" id="WP_004919871.1">
    <property type="nucleotide sequence ID" value="NC_005966.1"/>
</dbReference>
<dbReference type="SMR" id="Q6FEH6"/>
<dbReference type="STRING" id="202950.GCA_001485005_00844"/>
<dbReference type="GeneID" id="45233085"/>
<dbReference type="KEGG" id="aci:ACIAD0609"/>
<dbReference type="eggNOG" id="COG0173">
    <property type="taxonomic scope" value="Bacteria"/>
</dbReference>
<dbReference type="HOGENOM" id="CLU_014330_3_2_6"/>
<dbReference type="OrthoDB" id="9802326at2"/>
<dbReference type="BioCyc" id="ASP62977:ACIAD_RS02785-MONOMER"/>
<dbReference type="Proteomes" id="UP000000430">
    <property type="component" value="Chromosome"/>
</dbReference>
<dbReference type="GO" id="GO:0005737">
    <property type="term" value="C:cytoplasm"/>
    <property type="evidence" value="ECO:0007669"/>
    <property type="project" value="UniProtKB-SubCell"/>
</dbReference>
<dbReference type="GO" id="GO:0004815">
    <property type="term" value="F:aspartate-tRNA ligase activity"/>
    <property type="evidence" value="ECO:0007669"/>
    <property type="project" value="UniProtKB-UniRule"/>
</dbReference>
<dbReference type="GO" id="GO:0050560">
    <property type="term" value="F:aspartate-tRNA(Asn) ligase activity"/>
    <property type="evidence" value="ECO:0007669"/>
    <property type="project" value="UniProtKB-EC"/>
</dbReference>
<dbReference type="GO" id="GO:0005524">
    <property type="term" value="F:ATP binding"/>
    <property type="evidence" value="ECO:0007669"/>
    <property type="project" value="UniProtKB-UniRule"/>
</dbReference>
<dbReference type="GO" id="GO:0003676">
    <property type="term" value="F:nucleic acid binding"/>
    <property type="evidence" value="ECO:0007669"/>
    <property type="project" value="InterPro"/>
</dbReference>
<dbReference type="GO" id="GO:0006422">
    <property type="term" value="P:aspartyl-tRNA aminoacylation"/>
    <property type="evidence" value="ECO:0007669"/>
    <property type="project" value="UniProtKB-UniRule"/>
</dbReference>
<dbReference type="CDD" id="cd00777">
    <property type="entry name" value="AspRS_core"/>
    <property type="match status" value="1"/>
</dbReference>
<dbReference type="CDD" id="cd04317">
    <property type="entry name" value="EcAspRS_like_N"/>
    <property type="match status" value="1"/>
</dbReference>
<dbReference type="Gene3D" id="3.30.930.10">
    <property type="entry name" value="Bira Bifunctional Protein, Domain 2"/>
    <property type="match status" value="1"/>
</dbReference>
<dbReference type="Gene3D" id="3.30.1360.30">
    <property type="entry name" value="GAD-like domain"/>
    <property type="match status" value="1"/>
</dbReference>
<dbReference type="Gene3D" id="2.40.50.140">
    <property type="entry name" value="Nucleic acid-binding proteins"/>
    <property type="match status" value="1"/>
</dbReference>
<dbReference type="HAMAP" id="MF_00044">
    <property type="entry name" value="Asp_tRNA_synth_type1"/>
    <property type="match status" value="1"/>
</dbReference>
<dbReference type="InterPro" id="IPR004364">
    <property type="entry name" value="Aa-tRNA-synt_II"/>
</dbReference>
<dbReference type="InterPro" id="IPR006195">
    <property type="entry name" value="aa-tRNA-synth_II"/>
</dbReference>
<dbReference type="InterPro" id="IPR045864">
    <property type="entry name" value="aa-tRNA-synth_II/BPL/LPL"/>
</dbReference>
<dbReference type="InterPro" id="IPR004524">
    <property type="entry name" value="Asp-tRNA-ligase_1"/>
</dbReference>
<dbReference type="InterPro" id="IPR047089">
    <property type="entry name" value="Asp-tRNA-ligase_1_N"/>
</dbReference>
<dbReference type="InterPro" id="IPR002312">
    <property type="entry name" value="Asp/Asn-tRNA-synth_IIb"/>
</dbReference>
<dbReference type="InterPro" id="IPR047090">
    <property type="entry name" value="AspRS_core"/>
</dbReference>
<dbReference type="InterPro" id="IPR004115">
    <property type="entry name" value="GAD-like_sf"/>
</dbReference>
<dbReference type="InterPro" id="IPR029351">
    <property type="entry name" value="GAD_dom"/>
</dbReference>
<dbReference type="InterPro" id="IPR012340">
    <property type="entry name" value="NA-bd_OB-fold"/>
</dbReference>
<dbReference type="InterPro" id="IPR004365">
    <property type="entry name" value="NA-bd_OB_tRNA"/>
</dbReference>
<dbReference type="NCBIfam" id="TIGR00459">
    <property type="entry name" value="aspS_bact"/>
    <property type="match status" value="1"/>
</dbReference>
<dbReference type="NCBIfam" id="NF001750">
    <property type="entry name" value="PRK00476.1"/>
    <property type="match status" value="1"/>
</dbReference>
<dbReference type="PANTHER" id="PTHR22594:SF5">
    <property type="entry name" value="ASPARTATE--TRNA LIGASE, MITOCHONDRIAL"/>
    <property type="match status" value="1"/>
</dbReference>
<dbReference type="PANTHER" id="PTHR22594">
    <property type="entry name" value="ASPARTYL/LYSYL-TRNA SYNTHETASE"/>
    <property type="match status" value="1"/>
</dbReference>
<dbReference type="Pfam" id="PF02938">
    <property type="entry name" value="GAD"/>
    <property type="match status" value="1"/>
</dbReference>
<dbReference type="Pfam" id="PF00152">
    <property type="entry name" value="tRNA-synt_2"/>
    <property type="match status" value="1"/>
</dbReference>
<dbReference type="Pfam" id="PF01336">
    <property type="entry name" value="tRNA_anti-codon"/>
    <property type="match status" value="1"/>
</dbReference>
<dbReference type="PRINTS" id="PR01042">
    <property type="entry name" value="TRNASYNTHASP"/>
</dbReference>
<dbReference type="SUPFAM" id="SSF55681">
    <property type="entry name" value="Class II aaRS and biotin synthetases"/>
    <property type="match status" value="1"/>
</dbReference>
<dbReference type="SUPFAM" id="SSF55261">
    <property type="entry name" value="GAD domain-like"/>
    <property type="match status" value="1"/>
</dbReference>
<dbReference type="SUPFAM" id="SSF50249">
    <property type="entry name" value="Nucleic acid-binding proteins"/>
    <property type="match status" value="1"/>
</dbReference>
<dbReference type="PROSITE" id="PS50862">
    <property type="entry name" value="AA_TRNA_LIGASE_II"/>
    <property type="match status" value="1"/>
</dbReference>
<gene>
    <name evidence="1" type="primary">aspS</name>
    <name type="ordered locus">ACIAD0609</name>
</gene>